<name>RR19_CUSOB</name>
<protein>
    <recommendedName>
        <fullName evidence="1">Small ribosomal subunit protein uS19c</fullName>
    </recommendedName>
    <alternativeName>
        <fullName evidence="2">30S ribosomal protein S19, plastid</fullName>
    </alternativeName>
</protein>
<accession>A8W3M2</accession>
<geneLocation type="plastid"/>
<proteinExistence type="inferred from homology"/>
<dbReference type="EMBL" id="EU189133">
    <property type="protein sequence ID" value="ABW20597.1"/>
    <property type="molecule type" value="Genomic_DNA"/>
</dbReference>
<dbReference type="RefSeq" id="YP_001531252.1">
    <property type="nucleotide sequence ID" value="NC_009949.1"/>
</dbReference>
<dbReference type="SMR" id="A8W3M2"/>
<dbReference type="GeneID" id="5714799"/>
<dbReference type="GO" id="GO:0005763">
    <property type="term" value="C:mitochondrial small ribosomal subunit"/>
    <property type="evidence" value="ECO:0007669"/>
    <property type="project" value="TreeGrafter"/>
</dbReference>
<dbReference type="GO" id="GO:0009536">
    <property type="term" value="C:plastid"/>
    <property type="evidence" value="ECO:0007669"/>
    <property type="project" value="UniProtKB-SubCell"/>
</dbReference>
<dbReference type="GO" id="GO:0019843">
    <property type="term" value="F:rRNA binding"/>
    <property type="evidence" value="ECO:0007669"/>
    <property type="project" value="UniProtKB-KW"/>
</dbReference>
<dbReference type="GO" id="GO:0003735">
    <property type="term" value="F:structural constituent of ribosome"/>
    <property type="evidence" value="ECO:0007669"/>
    <property type="project" value="InterPro"/>
</dbReference>
<dbReference type="GO" id="GO:0000028">
    <property type="term" value="P:ribosomal small subunit assembly"/>
    <property type="evidence" value="ECO:0007669"/>
    <property type="project" value="TreeGrafter"/>
</dbReference>
<dbReference type="GO" id="GO:0006412">
    <property type="term" value="P:translation"/>
    <property type="evidence" value="ECO:0007669"/>
    <property type="project" value="InterPro"/>
</dbReference>
<dbReference type="FunFam" id="3.30.860.10:FF:000001">
    <property type="entry name" value="30S ribosomal protein S19"/>
    <property type="match status" value="1"/>
</dbReference>
<dbReference type="Gene3D" id="3.30.860.10">
    <property type="entry name" value="30s Ribosomal Protein S19, Chain A"/>
    <property type="match status" value="1"/>
</dbReference>
<dbReference type="HAMAP" id="MF_00531">
    <property type="entry name" value="Ribosomal_uS19"/>
    <property type="match status" value="1"/>
</dbReference>
<dbReference type="InterPro" id="IPR002222">
    <property type="entry name" value="Ribosomal_uS19"/>
</dbReference>
<dbReference type="InterPro" id="IPR005732">
    <property type="entry name" value="Ribosomal_uS19_bac-type"/>
</dbReference>
<dbReference type="InterPro" id="IPR020934">
    <property type="entry name" value="Ribosomal_uS19_CS"/>
</dbReference>
<dbReference type="InterPro" id="IPR023575">
    <property type="entry name" value="Ribosomal_uS19_SF"/>
</dbReference>
<dbReference type="NCBIfam" id="TIGR01050">
    <property type="entry name" value="rpsS_bact"/>
    <property type="match status" value="1"/>
</dbReference>
<dbReference type="PANTHER" id="PTHR11880">
    <property type="entry name" value="RIBOSOMAL PROTEIN S19P FAMILY MEMBER"/>
    <property type="match status" value="1"/>
</dbReference>
<dbReference type="PANTHER" id="PTHR11880:SF8">
    <property type="entry name" value="SMALL RIBOSOMAL SUBUNIT PROTEIN US19M"/>
    <property type="match status" value="1"/>
</dbReference>
<dbReference type="Pfam" id="PF00203">
    <property type="entry name" value="Ribosomal_S19"/>
    <property type="match status" value="1"/>
</dbReference>
<dbReference type="PIRSF" id="PIRSF002144">
    <property type="entry name" value="Ribosomal_S19"/>
    <property type="match status" value="1"/>
</dbReference>
<dbReference type="PRINTS" id="PR00975">
    <property type="entry name" value="RIBOSOMALS19"/>
</dbReference>
<dbReference type="SUPFAM" id="SSF54570">
    <property type="entry name" value="Ribosomal protein S19"/>
    <property type="match status" value="1"/>
</dbReference>
<dbReference type="PROSITE" id="PS00323">
    <property type="entry name" value="RIBOSOMAL_S19"/>
    <property type="match status" value="1"/>
</dbReference>
<keyword id="KW-0934">Plastid</keyword>
<keyword id="KW-0687">Ribonucleoprotein</keyword>
<keyword id="KW-0689">Ribosomal protein</keyword>
<keyword id="KW-0694">RNA-binding</keyword>
<keyword id="KW-0699">rRNA-binding</keyword>
<feature type="chain" id="PRO_0000354348" description="Small ribosomal subunit protein uS19c">
    <location>
        <begin position="1"/>
        <end position="92"/>
    </location>
</feature>
<reference key="1">
    <citation type="journal article" date="2007" name="BMC Plant Biol.">
        <title>Complete plastid genome sequences suggest strong selection for retention of photosynthetic genes in the parasitic plant genus Cuscuta.</title>
        <authorList>
            <person name="McNeal J.R."/>
            <person name="Kuehl J.V."/>
            <person name="Boore J.L."/>
            <person name="dePamphilis C.W."/>
        </authorList>
    </citation>
    <scope>NUCLEOTIDE SEQUENCE [LARGE SCALE GENOMIC DNA]</scope>
</reference>
<gene>
    <name evidence="1" type="primary">rps19</name>
</gene>
<comment type="function">
    <text evidence="1">Protein S19 forms a complex with S13 that binds strongly to the 16S ribosomal RNA.</text>
</comment>
<comment type="subcellular location">
    <subcellularLocation>
        <location>Plastid</location>
    </subcellularLocation>
</comment>
<comment type="similarity">
    <text evidence="1">Belongs to the universal ribosomal protein uS19 family.</text>
</comment>
<comment type="caution">
    <text evidence="2">Only inflorescences, fruits, starved seedlings and stressed stem tips are green in this organism.</text>
</comment>
<evidence type="ECO:0000255" key="1">
    <source>
        <dbReference type="HAMAP-Rule" id="MF_00531"/>
    </source>
</evidence>
<evidence type="ECO:0000305" key="2"/>
<organism>
    <name type="scientific">Cuscuta obtusiflora</name>
    <name type="common">Peruvian dodder</name>
    <dbReference type="NCBI Taxonomy" id="437280"/>
    <lineage>
        <taxon>Eukaryota</taxon>
        <taxon>Viridiplantae</taxon>
        <taxon>Streptophyta</taxon>
        <taxon>Embryophyta</taxon>
        <taxon>Tracheophyta</taxon>
        <taxon>Spermatophyta</taxon>
        <taxon>Magnoliopsida</taxon>
        <taxon>eudicotyledons</taxon>
        <taxon>Gunneridae</taxon>
        <taxon>Pentapetalae</taxon>
        <taxon>asterids</taxon>
        <taxon>lamiids</taxon>
        <taxon>Solanales</taxon>
        <taxon>Convolvulaceae</taxon>
        <taxon>Cuscuteae</taxon>
        <taxon>Cuscuta</taxon>
        <taxon>Cuscuta subgen. Grammica</taxon>
        <taxon>Cuscuta sect. Cleistogrammica</taxon>
    </lineage>
</organism>
<sequence>MTYSRKKNPFVANNLLKKINKLNRKAKKEIIITWSRGSTIIPIMIGHTIAIHNGKEHLPIYIMDDMVGHKLGEFAATLNFRGHEKGDNKSRR</sequence>